<gene>
    <name evidence="9" type="primary">tenB</name>
    <name evidence="8" type="synonym">ORF2</name>
</gene>
<keyword id="KW-0349">Heme</keyword>
<keyword id="KW-0408">Iron</keyword>
<keyword id="KW-0472">Membrane</keyword>
<keyword id="KW-0479">Metal-binding</keyword>
<keyword id="KW-0503">Monooxygenase</keyword>
<keyword id="KW-0560">Oxidoreductase</keyword>
<keyword id="KW-0812">Transmembrane</keyword>
<keyword id="KW-1133">Transmembrane helix</keyword>
<dbReference type="EC" id="1.-.-.-" evidence="5"/>
<dbReference type="EMBL" id="HM243222">
    <property type="protein sequence ID" value="ADN43683.1"/>
    <property type="molecule type" value="Genomic_DNA"/>
</dbReference>
<dbReference type="EMBL" id="AM409327">
    <property type="protein sequence ID" value="CAL69595.1"/>
    <property type="molecule type" value="Genomic_DNA"/>
</dbReference>
<dbReference type="SMR" id="A0JJT9"/>
<dbReference type="KEGG" id="ag:CAL69595"/>
<dbReference type="GO" id="GO:0016020">
    <property type="term" value="C:membrane"/>
    <property type="evidence" value="ECO:0007669"/>
    <property type="project" value="UniProtKB-SubCell"/>
</dbReference>
<dbReference type="GO" id="GO:0020037">
    <property type="term" value="F:heme binding"/>
    <property type="evidence" value="ECO:0007669"/>
    <property type="project" value="InterPro"/>
</dbReference>
<dbReference type="GO" id="GO:0005506">
    <property type="term" value="F:iron ion binding"/>
    <property type="evidence" value="ECO:0007669"/>
    <property type="project" value="InterPro"/>
</dbReference>
<dbReference type="GO" id="GO:0004497">
    <property type="term" value="F:monooxygenase activity"/>
    <property type="evidence" value="ECO:0007669"/>
    <property type="project" value="UniProtKB-KW"/>
</dbReference>
<dbReference type="GO" id="GO:0016705">
    <property type="term" value="F:oxidoreductase activity, acting on paired donors, with incorporation or reduction of molecular oxygen"/>
    <property type="evidence" value="ECO:0007669"/>
    <property type="project" value="InterPro"/>
</dbReference>
<dbReference type="GO" id="GO:0019748">
    <property type="term" value="P:secondary metabolic process"/>
    <property type="evidence" value="ECO:0007669"/>
    <property type="project" value="UniProtKB-ARBA"/>
</dbReference>
<dbReference type="CDD" id="cd11041">
    <property type="entry name" value="CYP503A1-like"/>
    <property type="match status" value="1"/>
</dbReference>
<dbReference type="Gene3D" id="1.10.630.10">
    <property type="entry name" value="Cytochrome P450"/>
    <property type="match status" value="1"/>
</dbReference>
<dbReference type="InterPro" id="IPR001128">
    <property type="entry name" value="Cyt_P450"/>
</dbReference>
<dbReference type="InterPro" id="IPR017972">
    <property type="entry name" value="Cyt_P450_CS"/>
</dbReference>
<dbReference type="InterPro" id="IPR002403">
    <property type="entry name" value="Cyt_P450_E_grp-IV"/>
</dbReference>
<dbReference type="InterPro" id="IPR036396">
    <property type="entry name" value="Cyt_P450_sf"/>
</dbReference>
<dbReference type="PANTHER" id="PTHR46206">
    <property type="entry name" value="CYTOCHROME P450"/>
    <property type="match status" value="1"/>
</dbReference>
<dbReference type="PANTHER" id="PTHR46206:SF1">
    <property type="entry name" value="P450, PUTATIVE (EUROFUNG)-RELATED"/>
    <property type="match status" value="1"/>
</dbReference>
<dbReference type="Pfam" id="PF00067">
    <property type="entry name" value="p450"/>
    <property type="match status" value="1"/>
</dbReference>
<dbReference type="PRINTS" id="PR00465">
    <property type="entry name" value="EP450IV"/>
</dbReference>
<dbReference type="SUPFAM" id="SSF48264">
    <property type="entry name" value="Cytochrome P450"/>
    <property type="match status" value="1"/>
</dbReference>
<dbReference type="PROSITE" id="PS00086">
    <property type="entry name" value="CYTOCHROME_P450"/>
    <property type="match status" value="1"/>
</dbReference>
<organism>
    <name type="scientific">Beauveria bassiana</name>
    <name type="common">White muscardine disease fungus</name>
    <name type="synonym">Tritirachium shiotae</name>
    <dbReference type="NCBI Taxonomy" id="176275"/>
    <lineage>
        <taxon>Eukaryota</taxon>
        <taxon>Fungi</taxon>
        <taxon>Dikarya</taxon>
        <taxon>Ascomycota</taxon>
        <taxon>Pezizomycotina</taxon>
        <taxon>Sordariomycetes</taxon>
        <taxon>Hypocreomycetidae</taxon>
        <taxon>Hypocreales</taxon>
        <taxon>Cordycipitaceae</taxon>
        <taxon>Beauveria</taxon>
    </lineage>
</organism>
<comment type="function">
    <text evidence="4 5 6 7">Cytochrome P450 monooxygenase; part of the gene cluster that mediates the biosynthesis of tenellin-type 2-pyridones, iron-chelating compounds involved in iron stress tolerance, competition with the natural competitor fungus Metarhizium robertsii and insect hosts infection (PubMed:17216664, PubMed:19067514, PubMed:20575135, PubMed:34903054). TenB catalyzes the selective N-hydroxylation of the 2-pyridone nitrogen of yield tellinin and 15-hydroxytellenin (15-HT), respectively (PubMed:19067514, PubMed:34903054). The pathway begins with the assembly of the polyketide-amino acid backbone by the hybrid PKS-NRPS tenS with the help of the enoyl reductase tenC. These enzymes catalyze the synthesis of the pyrrolidine-2-dione intermediates pretellinin A, 11-hydropretellenin A, 12-hydropretellenin A, 13-hydropretellenin A, 14-hydropretellenin A, 12-oxopretellenin A and prototellinin D. The cytochrome P450 monooxygenase tenA then catalyzes an oxidative ring expansion of pretenellin A and 14-hydropretellenin A to form the 2-pyridone core, leading to pretenellin B and pyridovericin, respectively. The cytochrome P450 monooxygenase tenB is then required for the selective N-hydroxylation of the 2-pyridone nitrogen of yield tellinin and 15-hydroxytellenin (15-HT), respectively. The UDP-glucosyltransferase GT1 and the methyltransferase MT1, located outside the tenS gene cluster, contribute to the stepwise glycosylation and methylation of 15-HT to obtain the glycoside pyridovericin-N-O-(4-O-methyl-beta-D-glucopyranoside) (PMGP). Additional related compounds such as 1-O-methyl-15-HT, (8Z)-1-O-methyl-15-HT, and O-methyltenellin A are also produced but the enzymes involved in their biosynthesis have still to be determined (PubMed:34903054).</text>
</comment>
<comment type="cofactor">
    <cofactor evidence="1">
        <name>heme</name>
        <dbReference type="ChEBI" id="CHEBI:30413"/>
    </cofactor>
</comment>
<comment type="pathway">
    <text evidence="4 5 6 7">Secondary metabolite biosynthesis.</text>
</comment>
<comment type="subcellular location">
    <subcellularLocation>
        <location evidence="2">Membrane</location>
        <topology evidence="2">Single-pass membrane protein</topology>
    </subcellularLocation>
</comment>
<comment type="induction">
    <text evidence="7">Expression is positively regulated by the cluster-specific transcription factor tenR and is induced during cocultures with the natural competitor fungus Metarhizium robertsii.</text>
</comment>
<comment type="disruption phenotype">
    <text evidence="5 7">Fails to produce tenellin, and accumulates pretenellin B (PubMed:19067514). Also leads to the accumulation of pyridovericin (PubMed:34903054).</text>
</comment>
<comment type="similarity">
    <text evidence="10">Belongs to the cytochrome P450 family.</text>
</comment>
<sequence length="539" mass="61065">MALFQAMSMVAQLGYYEKVAGVLGFLSIALLFWKLNHKPFYPALPLAGEPPQRRWFSLSNRLRYYNDCAALFDEAYHTAYAKKGKAVLVPSMGVHTAMIMPESAMNWAMSQPDDSLSIKKAFSELNQTKYSLGHGRYWEDPWQLDLVKAHLSSILQNLIPQLNEELAAAFSKHLGTDAENWKEIELEVIMRRIIAQATSRFIVGLPLCRDDGYLDLSYKVILGMVTTIWATLPFPDLIRAITGPIASWQTRRNIARIQEYLEPLYQERISILESRDGPESDPEPQDLFMMMLRFAQKKRPDEYANLGIMTRRVCAANFVAMHQSTVSVTNLILNIIGSDAEFNTTATLRDEITQVMRGTDAKSWTKDTFTRMRKCDSVAREAMRLNFPLGTRGSMRAVLKDGLESPEGIKLQKGTTISWLASCAQVDADRFDNPQKFDPFRFSRASKDDDDDGKSTSSHAKDAFVTTSPQYLPFGHGKHACPGRFMVDLMFKILLAQLLTHYDLGWPEDYQGKQPPSVWQGELSEPPPGARILVKRRKV</sequence>
<accession>A0JJT9</accession>
<accession>E2GC97</accession>
<protein>
    <recommendedName>
        <fullName evidence="8">Cytochrome P450 monooxygenase tenB</fullName>
        <ecNumber evidence="5">1.-.-.-</ecNumber>
    </recommendedName>
    <alternativeName>
        <fullName evidence="8">Tenellin biosynthesis protein B</fullName>
    </alternativeName>
</protein>
<evidence type="ECO:0000250" key="1">
    <source>
        <dbReference type="UniProtKB" id="P04798"/>
    </source>
</evidence>
<evidence type="ECO:0000255" key="2"/>
<evidence type="ECO:0000256" key="3">
    <source>
        <dbReference type="SAM" id="MobiDB-lite"/>
    </source>
</evidence>
<evidence type="ECO:0000269" key="4">
    <source>
    </source>
</evidence>
<evidence type="ECO:0000269" key="5">
    <source>
    </source>
</evidence>
<evidence type="ECO:0000269" key="6">
    <source>
    </source>
</evidence>
<evidence type="ECO:0000269" key="7">
    <source>
    </source>
</evidence>
<evidence type="ECO:0000303" key="8">
    <source>
    </source>
</evidence>
<evidence type="ECO:0000303" key="9">
    <source>
    </source>
</evidence>
<evidence type="ECO:0000305" key="10"/>
<reference key="1">
    <citation type="journal article" date="2007" name="ChemBioChem">
        <title>Biosynthesis of the 2-pyridone tenellin in the insect pathogenic fungus Beauveria bassiana.</title>
        <authorList>
            <person name="Eley K.L."/>
            <person name="Halo L.M."/>
            <person name="Song Z."/>
            <person name="Powles H."/>
            <person name="Cox R.J."/>
            <person name="Bailey A.M."/>
            <person name="Lazarus C.M."/>
            <person name="Simpson T.J."/>
        </authorList>
    </citation>
    <scope>NUCLEOTIDE SEQUENCE [GENOMIC DNA]</scope>
    <scope>FUNCTION</scope>
    <scope>PATHWAY</scope>
    <source>
        <strain>CBS 110.25</strain>
    </source>
</reference>
<reference key="2">
    <citation type="submission" date="2010-05" db="EMBL/GenBank/DDBJ databases">
        <title>Isolation of the desmethylbassianin gene cluster from the insect pathogenic fungus Beauveria bassiana.</title>
        <authorList>
            <person name="Heneghan M.N."/>
            <person name="Yakasai A.A."/>
            <person name="Bailey A.M."/>
            <person name="Cox R.J."/>
            <person name="Simpson T.J."/>
            <person name="Lazarus C.M."/>
        </authorList>
    </citation>
    <scope>NUCLEOTIDE SEQUENCE [GENOMIC DNA]</scope>
    <source>
        <strain>992.05</strain>
    </source>
</reference>
<reference key="3">
    <citation type="journal article" date="2008" name="J. Am. Chem. Soc.">
        <title>Late stage oxidations during the biosynthesis of the 2-pyridone tenellin in the entomopathogenic fungus Beauveria bassiana.</title>
        <authorList>
            <person name="Halo L.M."/>
            <person name="Heneghan M.N."/>
            <person name="Yakasai A.A."/>
            <person name="Song Z."/>
            <person name="Williams K."/>
            <person name="Bailey A.M."/>
            <person name="Cox R.J."/>
            <person name="Lazarus C.M."/>
            <person name="Simpson T.J."/>
        </authorList>
    </citation>
    <scope>FUNCTION</scope>
    <scope>DISRUPTION PHENOTYPE</scope>
    <scope>CATALYTIC ACTIVITY</scope>
    <scope>PATHWAY</scope>
</reference>
<reference key="4">
    <citation type="journal article" date="2010" name="ChemBioChem">
        <title>First heterologous reconstruction of a complete functional fungal biosynthetic multigene cluster.</title>
        <authorList>
            <person name="Heneghan M.N."/>
            <person name="Yakasai A.A."/>
            <person name="Halo L.M."/>
            <person name="Song Z."/>
            <person name="Bailey A.M."/>
            <person name="Simpson T.J."/>
            <person name="Cox R.J."/>
            <person name="Lazarus C.M."/>
        </authorList>
    </citation>
    <scope>FUNCTION</scope>
    <scope>PATHWAY</scope>
</reference>
<reference key="5">
    <citation type="journal article" date="2021" name="MBio">
        <title>Inductive production of the iron-chelating 2-pyridones benefits the producing fungus to compete for diverse niches.</title>
        <authorList>
            <person name="Chen B."/>
            <person name="Sun Y."/>
            <person name="Li S."/>
            <person name="Yin Y."/>
            <person name="Wang C."/>
        </authorList>
    </citation>
    <scope>FUNCTION</scope>
    <scope>INDUCTION</scope>
    <scope>DISRUPTION PHENOTYPE</scope>
    <scope>PATHWAY</scope>
</reference>
<feature type="chain" id="PRO_0000438452" description="Cytochrome P450 monooxygenase tenB">
    <location>
        <begin position="1"/>
        <end position="539"/>
    </location>
</feature>
<feature type="transmembrane region" description="Helical" evidence="2">
    <location>
        <begin position="13"/>
        <end position="33"/>
    </location>
</feature>
<feature type="region of interest" description="Disordered" evidence="3">
    <location>
        <begin position="439"/>
        <end position="460"/>
    </location>
</feature>
<feature type="binding site" description="axial binding residue" evidence="1">
    <location>
        <position position="481"/>
    </location>
    <ligand>
        <name>heme</name>
        <dbReference type="ChEBI" id="CHEBI:30413"/>
    </ligand>
    <ligandPart>
        <name>Fe</name>
        <dbReference type="ChEBI" id="CHEBI:18248"/>
    </ligandPart>
</feature>
<proteinExistence type="evidence at protein level"/>
<name>TENB_BEABA</name>